<gene>
    <name evidence="1" type="primary">rplO</name>
    <name type="ordered locus">SERP1812</name>
</gene>
<evidence type="ECO:0000255" key="1">
    <source>
        <dbReference type="HAMAP-Rule" id="MF_01341"/>
    </source>
</evidence>
<evidence type="ECO:0000256" key="2">
    <source>
        <dbReference type="SAM" id="MobiDB-lite"/>
    </source>
</evidence>
<evidence type="ECO:0000305" key="3"/>
<proteinExistence type="inferred from homology"/>
<organism>
    <name type="scientific">Staphylococcus epidermidis (strain ATCC 35984 / DSM 28319 / BCRC 17069 / CCUG 31568 / BM 3577 / RP62A)</name>
    <dbReference type="NCBI Taxonomy" id="176279"/>
    <lineage>
        <taxon>Bacteria</taxon>
        <taxon>Bacillati</taxon>
        <taxon>Bacillota</taxon>
        <taxon>Bacilli</taxon>
        <taxon>Bacillales</taxon>
        <taxon>Staphylococcaceae</taxon>
        <taxon>Staphylococcus</taxon>
    </lineage>
</organism>
<feature type="chain" id="PRO_0000104816" description="Large ribosomal subunit protein uL15">
    <location>
        <begin position="1"/>
        <end position="146"/>
    </location>
</feature>
<feature type="region of interest" description="Disordered" evidence="2">
    <location>
        <begin position="1"/>
        <end position="56"/>
    </location>
</feature>
<feature type="compositionally biased region" description="Basic and acidic residues" evidence="2">
    <location>
        <begin position="1"/>
        <end position="13"/>
    </location>
</feature>
<feature type="compositionally biased region" description="Gly residues" evidence="2">
    <location>
        <begin position="23"/>
        <end position="35"/>
    </location>
</feature>
<comment type="function">
    <text evidence="1">Binds to the 23S rRNA.</text>
</comment>
<comment type="subunit">
    <text evidence="1">Part of the 50S ribosomal subunit.</text>
</comment>
<comment type="similarity">
    <text evidence="1">Belongs to the universal ribosomal protein uL15 family.</text>
</comment>
<reference key="1">
    <citation type="journal article" date="2005" name="J. Bacteriol.">
        <title>Insights on evolution of virulence and resistance from the complete genome analysis of an early methicillin-resistant Staphylococcus aureus strain and a biofilm-producing methicillin-resistant Staphylococcus epidermidis strain.</title>
        <authorList>
            <person name="Gill S.R."/>
            <person name="Fouts D.E."/>
            <person name="Archer G.L."/>
            <person name="Mongodin E.F."/>
            <person name="DeBoy R.T."/>
            <person name="Ravel J."/>
            <person name="Paulsen I.T."/>
            <person name="Kolonay J.F."/>
            <person name="Brinkac L.M."/>
            <person name="Beanan M.J."/>
            <person name="Dodson R.J."/>
            <person name="Daugherty S.C."/>
            <person name="Madupu R."/>
            <person name="Angiuoli S.V."/>
            <person name="Durkin A.S."/>
            <person name="Haft D.H."/>
            <person name="Vamathevan J.J."/>
            <person name="Khouri H."/>
            <person name="Utterback T.R."/>
            <person name="Lee C."/>
            <person name="Dimitrov G."/>
            <person name="Jiang L."/>
            <person name="Qin H."/>
            <person name="Weidman J."/>
            <person name="Tran K."/>
            <person name="Kang K.H."/>
            <person name="Hance I.R."/>
            <person name="Nelson K.E."/>
            <person name="Fraser C.M."/>
        </authorList>
    </citation>
    <scope>NUCLEOTIDE SEQUENCE [LARGE SCALE GENOMIC DNA]</scope>
    <source>
        <strain>ATCC 35984 / DSM 28319 / BCRC 17069 / CCUG 31568 / BM 3577 / RP62A</strain>
    </source>
</reference>
<name>RL15_STAEQ</name>
<keyword id="KW-1185">Reference proteome</keyword>
<keyword id="KW-0687">Ribonucleoprotein</keyword>
<keyword id="KW-0689">Ribosomal protein</keyword>
<keyword id="KW-0694">RNA-binding</keyword>
<keyword id="KW-0699">rRNA-binding</keyword>
<dbReference type="EMBL" id="CP000029">
    <property type="protein sequence ID" value="AAW55136.1"/>
    <property type="molecule type" value="Genomic_DNA"/>
</dbReference>
<dbReference type="RefSeq" id="WP_002456985.1">
    <property type="nucleotide sequence ID" value="NC_002976.3"/>
</dbReference>
<dbReference type="SMR" id="Q5HM18"/>
<dbReference type="STRING" id="176279.SERP1812"/>
<dbReference type="KEGG" id="ser:SERP1812"/>
<dbReference type="eggNOG" id="COG0200">
    <property type="taxonomic scope" value="Bacteria"/>
</dbReference>
<dbReference type="HOGENOM" id="CLU_055188_4_2_9"/>
<dbReference type="Proteomes" id="UP000000531">
    <property type="component" value="Chromosome"/>
</dbReference>
<dbReference type="GO" id="GO:0022625">
    <property type="term" value="C:cytosolic large ribosomal subunit"/>
    <property type="evidence" value="ECO:0007669"/>
    <property type="project" value="TreeGrafter"/>
</dbReference>
<dbReference type="GO" id="GO:0019843">
    <property type="term" value="F:rRNA binding"/>
    <property type="evidence" value="ECO:0007669"/>
    <property type="project" value="UniProtKB-UniRule"/>
</dbReference>
<dbReference type="GO" id="GO:0003735">
    <property type="term" value="F:structural constituent of ribosome"/>
    <property type="evidence" value="ECO:0007669"/>
    <property type="project" value="InterPro"/>
</dbReference>
<dbReference type="GO" id="GO:0006412">
    <property type="term" value="P:translation"/>
    <property type="evidence" value="ECO:0007669"/>
    <property type="project" value="UniProtKB-UniRule"/>
</dbReference>
<dbReference type="FunFam" id="3.100.10.10:FF:000004">
    <property type="entry name" value="50S ribosomal protein L15"/>
    <property type="match status" value="1"/>
</dbReference>
<dbReference type="Gene3D" id="3.100.10.10">
    <property type="match status" value="1"/>
</dbReference>
<dbReference type="HAMAP" id="MF_01341">
    <property type="entry name" value="Ribosomal_uL15"/>
    <property type="match status" value="1"/>
</dbReference>
<dbReference type="InterPro" id="IPR030878">
    <property type="entry name" value="Ribosomal_uL15"/>
</dbReference>
<dbReference type="InterPro" id="IPR021131">
    <property type="entry name" value="Ribosomal_uL15/eL18"/>
</dbReference>
<dbReference type="InterPro" id="IPR036227">
    <property type="entry name" value="Ribosomal_uL15/eL18_sf"/>
</dbReference>
<dbReference type="InterPro" id="IPR005749">
    <property type="entry name" value="Ribosomal_uL15_bac-type"/>
</dbReference>
<dbReference type="InterPro" id="IPR001196">
    <property type="entry name" value="Ribosomal_uL15_CS"/>
</dbReference>
<dbReference type="NCBIfam" id="TIGR01071">
    <property type="entry name" value="rplO_bact"/>
    <property type="match status" value="1"/>
</dbReference>
<dbReference type="PANTHER" id="PTHR12934">
    <property type="entry name" value="50S RIBOSOMAL PROTEIN L15"/>
    <property type="match status" value="1"/>
</dbReference>
<dbReference type="PANTHER" id="PTHR12934:SF11">
    <property type="entry name" value="LARGE RIBOSOMAL SUBUNIT PROTEIN UL15M"/>
    <property type="match status" value="1"/>
</dbReference>
<dbReference type="Pfam" id="PF00828">
    <property type="entry name" value="Ribosomal_L27A"/>
    <property type="match status" value="1"/>
</dbReference>
<dbReference type="SUPFAM" id="SSF52080">
    <property type="entry name" value="Ribosomal proteins L15p and L18e"/>
    <property type="match status" value="1"/>
</dbReference>
<dbReference type="PROSITE" id="PS00475">
    <property type="entry name" value="RIBOSOMAL_L15"/>
    <property type="match status" value="1"/>
</dbReference>
<protein>
    <recommendedName>
        <fullName evidence="1">Large ribosomal subunit protein uL15</fullName>
    </recommendedName>
    <alternativeName>
        <fullName evidence="3">50S ribosomal protein L15</fullName>
    </alternativeName>
</protein>
<sequence>MKLHELKAAEGSRRVRNRVGRGAATGNGKTSGRGQKGQKARSGGKLRPGFEGGQLPLFRRLPKRGFTNINRKEYAIVNLDQLNKFEDGTEVTPALLVESGVVKNEKSGIKVLGNGSLDKKLTVKAHKFSASAAEAIDAKGGAHEVI</sequence>
<accession>Q5HM18</accession>